<name>YAAA_SHIFL</name>
<accession>P0A8I4</accession>
<accession>P11288</accession>
<gene>
    <name type="primary">yaaA</name>
    <name type="ordered locus">SF0006</name>
    <name type="ordered locus">S0006</name>
</gene>
<sequence>MLILISPAKTLDYQSPLTTTRYTLPELLDNSQQLIHEARKLTPPQISTLMRISDKLAGINAARFHDWQPDFTPANARQAILAFKGDVYTGLQAETFSEDDFDFAQQHLRMLSGLYGVLRPLDLMQPYRLEMGIRLENARGKDLYQFWGDIITNKLNEALAAQGDNVVINLASDEYFKSVKPKKLNAEIIKPVFLDEKNGKFKIISFYAKKARGLMSRFIIENRLTKPEQLTGFNSEGYFFDEDSSSNGELVFKRYEQR</sequence>
<protein>
    <recommendedName>
        <fullName>UPF0246 protein YaaA</fullName>
    </recommendedName>
</protein>
<feature type="chain" id="PRO_0000204004" description="UPF0246 protein YaaA">
    <location>
        <begin position="1"/>
        <end position="258"/>
    </location>
</feature>
<organism>
    <name type="scientific">Shigella flexneri</name>
    <dbReference type="NCBI Taxonomy" id="623"/>
    <lineage>
        <taxon>Bacteria</taxon>
        <taxon>Pseudomonadati</taxon>
        <taxon>Pseudomonadota</taxon>
        <taxon>Gammaproteobacteria</taxon>
        <taxon>Enterobacterales</taxon>
        <taxon>Enterobacteriaceae</taxon>
        <taxon>Shigella</taxon>
    </lineage>
</organism>
<comment type="similarity">
    <text evidence="1">Belongs to the UPF0246 family.</text>
</comment>
<proteinExistence type="inferred from homology"/>
<evidence type="ECO:0000305" key="1"/>
<dbReference type="EMBL" id="AE005674">
    <property type="protein sequence ID" value="AAN41673.1"/>
    <property type="molecule type" value="Genomic_DNA"/>
</dbReference>
<dbReference type="EMBL" id="AE014073">
    <property type="protein sequence ID" value="AAP15553.1"/>
    <property type="molecule type" value="Genomic_DNA"/>
</dbReference>
<dbReference type="RefSeq" id="NP_705966.1">
    <property type="nucleotide sequence ID" value="NC_004337.2"/>
</dbReference>
<dbReference type="RefSeq" id="WP_000906197.1">
    <property type="nucleotide sequence ID" value="NZ_WPGW01000013.1"/>
</dbReference>
<dbReference type="SMR" id="P0A8I4"/>
<dbReference type="STRING" id="198214.SF0006"/>
<dbReference type="PaxDb" id="198214-SF0006"/>
<dbReference type="GeneID" id="1025603"/>
<dbReference type="KEGG" id="sfl:SF0006"/>
<dbReference type="KEGG" id="sfx:S0006"/>
<dbReference type="PATRIC" id="fig|198214.7.peg.5"/>
<dbReference type="HOGENOM" id="CLU_061989_0_0_6"/>
<dbReference type="Proteomes" id="UP000001006">
    <property type="component" value="Chromosome"/>
</dbReference>
<dbReference type="Proteomes" id="UP000002673">
    <property type="component" value="Chromosome"/>
</dbReference>
<dbReference type="GO" id="GO:0005829">
    <property type="term" value="C:cytosol"/>
    <property type="evidence" value="ECO:0007669"/>
    <property type="project" value="TreeGrafter"/>
</dbReference>
<dbReference type="GO" id="GO:0033194">
    <property type="term" value="P:response to hydroperoxide"/>
    <property type="evidence" value="ECO:0007669"/>
    <property type="project" value="TreeGrafter"/>
</dbReference>
<dbReference type="HAMAP" id="MF_00652">
    <property type="entry name" value="UPF0246"/>
    <property type="match status" value="1"/>
</dbReference>
<dbReference type="InterPro" id="IPR005583">
    <property type="entry name" value="YaaA"/>
</dbReference>
<dbReference type="NCBIfam" id="NF002541">
    <property type="entry name" value="PRK02101.1-1"/>
    <property type="match status" value="1"/>
</dbReference>
<dbReference type="NCBIfam" id="NF002542">
    <property type="entry name" value="PRK02101.1-3"/>
    <property type="match status" value="1"/>
</dbReference>
<dbReference type="PANTHER" id="PTHR30283:SF4">
    <property type="entry name" value="PEROXIDE STRESS RESISTANCE PROTEIN YAAA"/>
    <property type="match status" value="1"/>
</dbReference>
<dbReference type="PANTHER" id="PTHR30283">
    <property type="entry name" value="PEROXIDE STRESS RESPONSE PROTEIN YAAA"/>
    <property type="match status" value="1"/>
</dbReference>
<dbReference type="Pfam" id="PF03883">
    <property type="entry name" value="H2O2_YaaD"/>
    <property type="match status" value="1"/>
</dbReference>
<reference key="1">
    <citation type="journal article" date="2002" name="Nucleic Acids Res.">
        <title>Genome sequence of Shigella flexneri 2a: insights into pathogenicity through comparison with genomes of Escherichia coli K12 and O157.</title>
        <authorList>
            <person name="Jin Q."/>
            <person name="Yuan Z."/>
            <person name="Xu J."/>
            <person name="Wang Y."/>
            <person name="Shen Y."/>
            <person name="Lu W."/>
            <person name="Wang J."/>
            <person name="Liu H."/>
            <person name="Yang J."/>
            <person name="Yang F."/>
            <person name="Zhang X."/>
            <person name="Zhang J."/>
            <person name="Yang G."/>
            <person name="Wu H."/>
            <person name="Qu D."/>
            <person name="Dong J."/>
            <person name="Sun L."/>
            <person name="Xue Y."/>
            <person name="Zhao A."/>
            <person name="Gao Y."/>
            <person name="Zhu J."/>
            <person name="Kan B."/>
            <person name="Ding K."/>
            <person name="Chen S."/>
            <person name="Cheng H."/>
            <person name="Yao Z."/>
            <person name="He B."/>
            <person name="Chen R."/>
            <person name="Ma D."/>
            <person name="Qiang B."/>
            <person name="Wen Y."/>
            <person name="Hou Y."/>
            <person name="Yu J."/>
        </authorList>
    </citation>
    <scope>NUCLEOTIDE SEQUENCE [LARGE SCALE GENOMIC DNA]</scope>
    <source>
        <strain>301 / Serotype 2a</strain>
    </source>
</reference>
<reference key="2">
    <citation type="journal article" date="2003" name="Infect. Immun.">
        <title>Complete genome sequence and comparative genomics of Shigella flexneri serotype 2a strain 2457T.</title>
        <authorList>
            <person name="Wei J."/>
            <person name="Goldberg M.B."/>
            <person name="Burland V."/>
            <person name="Venkatesan M.M."/>
            <person name="Deng W."/>
            <person name="Fournier G."/>
            <person name="Mayhew G.F."/>
            <person name="Plunkett G. III"/>
            <person name="Rose D.J."/>
            <person name="Darling A."/>
            <person name="Mau B."/>
            <person name="Perna N.T."/>
            <person name="Payne S.M."/>
            <person name="Runyen-Janecky L.J."/>
            <person name="Zhou S."/>
            <person name="Schwartz D.C."/>
            <person name="Blattner F.R."/>
        </authorList>
    </citation>
    <scope>NUCLEOTIDE SEQUENCE [LARGE SCALE GENOMIC DNA]</scope>
    <source>
        <strain>ATCC 700930 / 2457T / Serotype 2a</strain>
    </source>
</reference>
<keyword id="KW-1185">Reference proteome</keyword>